<proteinExistence type="evidence at protein level"/>
<sequence>MKRSISPDPFSSTKSPKLVHHSPDDGGAEGNPYRLPFTLSDENLSCLPISQAREPPPIFNLDPNSVKDTQDRNKLYLAKAWDLLKPAIKIILDDDEYKKPGDVLCFTTIFRAVKRACLGDPRQSELVFNLVKHECEPHIAELIQSLEKNCSGSDDPSVFLPHVYNRWLDFKRKMSLVSDVAMYQTLNGLTLWDVGQKLFHKQLSMAPQLQDQVITGILRLITDERLGKAANNTSDLLKNLMDMFRMQWQCTYVYKDPFLDSTSKFYAEEAEQVLQRSDISHYLKYVERTFLAEEEKCDKHYFFFSSSRSRLMKVLKSQLLEAHSSFLEEGFMLLMDESLIDDLRRMYRLFSMVDSEDYIDRILRAYILAKGEGARQEGSLQELHTSIDKIWHQCFGQDDLLDKTIRDCFEGFGLHVPGEFSDQLQWIDDDDDED</sequence>
<protein>
    <recommendedName>
        <fullName>Cullin-like protein 5</fullName>
    </recommendedName>
</protein>
<name>CLL5_ARATH</name>
<gene>
    <name type="ordered locus">At4g12100</name>
    <name type="ORF">F16J13.170</name>
</gene>
<evidence type="ECO:0000256" key="1">
    <source>
        <dbReference type="SAM" id="MobiDB-lite"/>
    </source>
</evidence>
<evidence type="ECO:0000305" key="2"/>
<keyword id="KW-1185">Reference proteome</keyword>
<reference key="1">
    <citation type="journal article" date="1999" name="Nature">
        <title>Sequence and analysis of chromosome 4 of the plant Arabidopsis thaliana.</title>
        <authorList>
            <person name="Mayer K.F.X."/>
            <person name="Schueller C."/>
            <person name="Wambutt R."/>
            <person name="Murphy G."/>
            <person name="Volckaert G."/>
            <person name="Pohl T."/>
            <person name="Duesterhoeft A."/>
            <person name="Stiekema W."/>
            <person name="Entian K.-D."/>
            <person name="Terryn N."/>
            <person name="Harris B."/>
            <person name="Ansorge W."/>
            <person name="Brandt P."/>
            <person name="Grivell L.A."/>
            <person name="Rieger M."/>
            <person name="Weichselgartner M."/>
            <person name="de Simone V."/>
            <person name="Obermaier B."/>
            <person name="Mache R."/>
            <person name="Mueller M."/>
            <person name="Kreis M."/>
            <person name="Delseny M."/>
            <person name="Puigdomenech P."/>
            <person name="Watson M."/>
            <person name="Schmidtheini T."/>
            <person name="Reichert B."/>
            <person name="Portetelle D."/>
            <person name="Perez-Alonso M."/>
            <person name="Boutry M."/>
            <person name="Bancroft I."/>
            <person name="Vos P."/>
            <person name="Hoheisel J."/>
            <person name="Zimmermann W."/>
            <person name="Wedler H."/>
            <person name="Ridley P."/>
            <person name="Langham S.-A."/>
            <person name="McCullagh B."/>
            <person name="Bilham L."/>
            <person name="Robben J."/>
            <person name="van der Schueren J."/>
            <person name="Grymonprez B."/>
            <person name="Chuang Y.-J."/>
            <person name="Vandenbussche F."/>
            <person name="Braeken M."/>
            <person name="Weltjens I."/>
            <person name="Voet M."/>
            <person name="Bastiaens I."/>
            <person name="Aert R."/>
            <person name="Defoor E."/>
            <person name="Weitzenegger T."/>
            <person name="Bothe G."/>
            <person name="Ramsperger U."/>
            <person name="Hilbert H."/>
            <person name="Braun M."/>
            <person name="Holzer E."/>
            <person name="Brandt A."/>
            <person name="Peters S."/>
            <person name="van Staveren M."/>
            <person name="Dirkse W."/>
            <person name="Mooijman P."/>
            <person name="Klein Lankhorst R."/>
            <person name="Rose M."/>
            <person name="Hauf J."/>
            <person name="Koetter P."/>
            <person name="Berneiser S."/>
            <person name="Hempel S."/>
            <person name="Feldpausch M."/>
            <person name="Lamberth S."/>
            <person name="Van den Daele H."/>
            <person name="De Keyser A."/>
            <person name="Buysshaert C."/>
            <person name="Gielen J."/>
            <person name="Villarroel R."/>
            <person name="De Clercq R."/>
            <person name="van Montagu M."/>
            <person name="Rogers J."/>
            <person name="Cronin A."/>
            <person name="Quail M.A."/>
            <person name="Bray-Allen S."/>
            <person name="Clark L."/>
            <person name="Doggett J."/>
            <person name="Hall S."/>
            <person name="Kay M."/>
            <person name="Lennard N."/>
            <person name="McLay K."/>
            <person name="Mayes R."/>
            <person name="Pettett A."/>
            <person name="Rajandream M.A."/>
            <person name="Lyne M."/>
            <person name="Benes V."/>
            <person name="Rechmann S."/>
            <person name="Borkova D."/>
            <person name="Bloecker H."/>
            <person name="Scharfe M."/>
            <person name="Grimm M."/>
            <person name="Loehnert T.-H."/>
            <person name="Dose S."/>
            <person name="de Haan M."/>
            <person name="Maarse A.C."/>
            <person name="Schaefer M."/>
            <person name="Mueller-Auer S."/>
            <person name="Gabel C."/>
            <person name="Fuchs M."/>
            <person name="Fartmann B."/>
            <person name="Granderath K."/>
            <person name="Dauner D."/>
            <person name="Herzl A."/>
            <person name="Neumann S."/>
            <person name="Argiriou A."/>
            <person name="Vitale D."/>
            <person name="Liguori R."/>
            <person name="Piravandi E."/>
            <person name="Massenet O."/>
            <person name="Quigley F."/>
            <person name="Clabauld G."/>
            <person name="Muendlein A."/>
            <person name="Felber R."/>
            <person name="Schnabl S."/>
            <person name="Hiller R."/>
            <person name="Schmidt W."/>
            <person name="Lecharny A."/>
            <person name="Aubourg S."/>
            <person name="Chefdor F."/>
            <person name="Cooke R."/>
            <person name="Berger C."/>
            <person name="Monfort A."/>
            <person name="Casacuberta E."/>
            <person name="Gibbons T."/>
            <person name="Weber N."/>
            <person name="Vandenbol M."/>
            <person name="Bargues M."/>
            <person name="Terol J."/>
            <person name="Torres A."/>
            <person name="Perez-Perez A."/>
            <person name="Purnelle B."/>
            <person name="Bent E."/>
            <person name="Johnson S."/>
            <person name="Tacon D."/>
            <person name="Jesse T."/>
            <person name="Heijnen L."/>
            <person name="Schwarz S."/>
            <person name="Scholler P."/>
            <person name="Heber S."/>
            <person name="Francs P."/>
            <person name="Bielke C."/>
            <person name="Frishman D."/>
            <person name="Haase D."/>
            <person name="Lemcke K."/>
            <person name="Mewes H.-W."/>
            <person name="Stocker S."/>
            <person name="Zaccaria P."/>
            <person name="Bevan M."/>
            <person name="Wilson R.K."/>
            <person name="de la Bastide M."/>
            <person name="Habermann K."/>
            <person name="Parnell L."/>
            <person name="Dedhia N."/>
            <person name="Gnoj L."/>
            <person name="Schutz K."/>
            <person name="Huang E."/>
            <person name="Spiegel L."/>
            <person name="Sekhon M."/>
            <person name="Murray J."/>
            <person name="Sheet P."/>
            <person name="Cordes M."/>
            <person name="Abu-Threideh J."/>
            <person name="Stoneking T."/>
            <person name="Kalicki J."/>
            <person name="Graves T."/>
            <person name="Harmon G."/>
            <person name="Edwards J."/>
            <person name="Latreille P."/>
            <person name="Courtney L."/>
            <person name="Cloud J."/>
            <person name="Abbott A."/>
            <person name="Scott K."/>
            <person name="Johnson D."/>
            <person name="Minx P."/>
            <person name="Bentley D."/>
            <person name="Fulton B."/>
            <person name="Miller N."/>
            <person name="Greco T."/>
            <person name="Kemp K."/>
            <person name="Kramer J."/>
            <person name="Fulton L."/>
            <person name="Mardis E."/>
            <person name="Dante M."/>
            <person name="Pepin K."/>
            <person name="Hillier L.W."/>
            <person name="Nelson J."/>
            <person name="Spieth J."/>
            <person name="Ryan E."/>
            <person name="Andrews S."/>
            <person name="Geisel C."/>
            <person name="Layman D."/>
            <person name="Du H."/>
            <person name="Ali J."/>
            <person name="Berghoff A."/>
            <person name="Jones K."/>
            <person name="Drone K."/>
            <person name="Cotton M."/>
            <person name="Joshu C."/>
            <person name="Antonoiu B."/>
            <person name="Zidanic M."/>
            <person name="Strong C."/>
            <person name="Sun H."/>
            <person name="Lamar B."/>
            <person name="Yordan C."/>
            <person name="Ma P."/>
            <person name="Zhong J."/>
            <person name="Preston R."/>
            <person name="Vil D."/>
            <person name="Shekher M."/>
            <person name="Matero A."/>
            <person name="Shah R."/>
            <person name="Swaby I.K."/>
            <person name="O'Shaughnessy A."/>
            <person name="Rodriguez M."/>
            <person name="Hoffman J."/>
            <person name="Till S."/>
            <person name="Granat S."/>
            <person name="Shohdy N."/>
            <person name="Hasegawa A."/>
            <person name="Hameed A."/>
            <person name="Lodhi M."/>
            <person name="Johnson A."/>
            <person name="Chen E."/>
            <person name="Marra M.A."/>
            <person name="Martienssen R."/>
            <person name="McCombie W.R."/>
        </authorList>
    </citation>
    <scope>NUCLEOTIDE SEQUENCE [LARGE SCALE GENOMIC DNA]</scope>
    <source>
        <strain>cv. Columbia</strain>
    </source>
</reference>
<reference key="2">
    <citation type="journal article" date="2017" name="Plant J.">
        <title>Araport11: a complete reannotation of the Arabidopsis thaliana reference genome.</title>
        <authorList>
            <person name="Cheng C.Y."/>
            <person name="Krishnakumar V."/>
            <person name="Chan A.P."/>
            <person name="Thibaud-Nissen F."/>
            <person name="Schobel S."/>
            <person name="Town C.D."/>
        </authorList>
    </citation>
    <scope>GENOME REANNOTATION</scope>
    <source>
        <strain>cv. Columbia</strain>
    </source>
</reference>
<reference key="3">
    <citation type="journal article" date="2003" name="Science">
        <title>Empirical analysis of transcriptional activity in the Arabidopsis genome.</title>
        <authorList>
            <person name="Yamada K."/>
            <person name="Lim J."/>
            <person name="Dale J.M."/>
            <person name="Chen H."/>
            <person name="Shinn P."/>
            <person name="Palm C.J."/>
            <person name="Southwick A.M."/>
            <person name="Wu H.C."/>
            <person name="Kim C.J."/>
            <person name="Nguyen M."/>
            <person name="Pham P.K."/>
            <person name="Cheuk R.F."/>
            <person name="Karlin-Newmann G."/>
            <person name="Liu S.X."/>
            <person name="Lam B."/>
            <person name="Sakano H."/>
            <person name="Wu T."/>
            <person name="Yu G."/>
            <person name="Miranda M."/>
            <person name="Quach H.L."/>
            <person name="Tripp M."/>
            <person name="Chang C.H."/>
            <person name="Lee J.M."/>
            <person name="Toriumi M.J."/>
            <person name="Chan M.M."/>
            <person name="Tang C.C."/>
            <person name="Onodera C.S."/>
            <person name="Deng J.M."/>
            <person name="Akiyama K."/>
            <person name="Ansari Y."/>
            <person name="Arakawa T."/>
            <person name="Banh J."/>
            <person name="Banno F."/>
            <person name="Bowser L."/>
            <person name="Brooks S.Y."/>
            <person name="Carninci P."/>
            <person name="Chao Q."/>
            <person name="Choy N."/>
            <person name="Enju A."/>
            <person name="Goldsmith A.D."/>
            <person name="Gurjal M."/>
            <person name="Hansen N.F."/>
            <person name="Hayashizaki Y."/>
            <person name="Johnson-Hopson C."/>
            <person name="Hsuan V.W."/>
            <person name="Iida K."/>
            <person name="Karnes M."/>
            <person name="Khan S."/>
            <person name="Koesema E."/>
            <person name="Ishida J."/>
            <person name="Jiang P.X."/>
            <person name="Jones T."/>
            <person name="Kawai J."/>
            <person name="Kamiya A."/>
            <person name="Meyers C."/>
            <person name="Nakajima M."/>
            <person name="Narusaka M."/>
            <person name="Seki M."/>
            <person name="Sakurai T."/>
            <person name="Satou M."/>
            <person name="Tamse R."/>
            <person name="Vaysberg M."/>
            <person name="Wallender E.K."/>
            <person name="Wong C."/>
            <person name="Yamamura Y."/>
            <person name="Yuan S."/>
            <person name="Shinozaki K."/>
            <person name="Davis R.W."/>
            <person name="Theologis A."/>
            <person name="Ecker J.R."/>
        </authorList>
    </citation>
    <scope>NUCLEOTIDE SEQUENCE [LARGE SCALE MRNA]</scope>
    <source>
        <strain>cv. Columbia</strain>
    </source>
</reference>
<dbReference type="EMBL" id="AL049638">
    <property type="protein sequence ID" value="CAB40951.1"/>
    <property type="molecule type" value="Genomic_DNA"/>
</dbReference>
<dbReference type="EMBL" id="AL161533">
    <property type="protein sequence ID" value="CAB78253.1"/>
    <property type="molecule type" value="Genomic_DNA"/>
</dbReference>
<dbReference type="EMBL" id="CP002687">
    <property type="protein sequence ID" value="AEE83096.1"/>
    <property type="molecule type" value="Genomic_DNA"/>
</dbReference>
<dbReference type="EMBL" id="AY133688">
    <property type="protein sequence ID" value="AAM91622.1"/>
    <property type="molecule type" value="mRNA"/>
</dbReference>
<dbReference type="PIR" id="T06617">
    <property type="entry name" value="T06617"/>
</dbReference>
<dbReference type="RefSeq" id="NP_192947.1">
    <property type="nucleotide sequence ID" value="NM_117280.3"/>
</dbReference>
<dbReference type="SMR" id="Q9SZ75"/>
<dbReference type="BioGRID" id="12116">
    <property type="interactions" value="2"/>
</dbReference>
<dbReference type="FunCoup" id="Q9SZ75">
    <property type="interactions" value="107"/>
</dbReference>
<dbReference type="IntAct" id="Q9SZ75">
    <property type="interactions" value="2"/>
</dbReference>
<dbReference type="STRING" id="3702.Q9SZ75"/>
<dbReference type="PaxDb" id="3702-AT4G12100.1"/>
<dbReference type="ProteomicsDB" id="246547"/>
<dbReference type="EnsemblPlants" id="AT4G12100.1">
    <property type="protein sequence ID" value="AT4G12100.1"/>
    <property type="gene ID" value="AT4G12100"/>
</dbReference>
<dbReference type="GeneID" id="826818"/>
<dbReference type="Gramene" id="AT4G12100.1">
    <property type="protein sequence ID" value="AT4G12100.1"/>
    <property type="gene ID" value="AT4G12100"/>
</dbReference>
<dbReference type="KEGG" id="ath:AT4G12100"/>
<dbReference type="Araport" id="AT4G12100"/>
<dbReference type="TAIR" id="AT4G12100"/>
<dbReference type="eggNOG" id="KOG2167">
    <property type="taxonomic scope" value="Eukaryota"/>
</dbReference>
<dbReference type="HOGENOM" id="CLU_004747_7_4_1"/>
<dbReference type="InParanoid" id="Q9SZ75"/>
<dbReference type="OMA" id="HECEPHI"/>
<dbReference type="PhylomeDB" id="Q9SZ75"/>
<dbReference type="PRO" id="PR:Q9SZ75"/>
<dbReference type="Proteomes" id="UP000006548">
    <property type="component" value="Chromosome 4"/>
</dbReference>
<dbReference type="ExpressionAtlas" id="Q9SZ75">
    <property type="expression patterns" value="baseline and differential"/>
</dbReference>
<dbReference type="GO" id="GO:0031625">
    <property type="term" value="F:ubiquitin protein ligase binding"/>
    <property type="evidence" value="ECO:0007669"/>
    <property type="project" value="InterPro"/>
</dbReference>
<dbReference type="GO" id="GO:0006511">
    <property type="term" value="P:ubiquitin-dependent protein catabolic process"/>
    <property type="evidence" value="ECO:0007669"/>
    <property type="project" value="InterPro"/>
</dbReference>
<dbReference type="FunFam" id="1.20.1310.10:FF:000044">
    <property type="entry name" value="Ubiquitin ligase subunit CulD, putative"/>
    <property type="match status" value="1"/>
</dbReference>
<dbReference type="Gene3D" id="1.20.1310.10">
    <property type="entry name" value="Cullin Repeats"/>
    <property type="match status" value="3"/>
</dbReference>
<dbReference type="InterPro" id="IPR045093">
    <property type="entry name" value="Cullin"/>
</dbReference>
<dbReference type="InterPro" id="IPR001373">
    <property type="entry name" value="Cullin_N"/>
</dbReference>
<dbReference type="InterPro" id="IPR016159">
    <property type="entry name" value="Cullin_repeat-like_dom_sf"/>
</dbReference>
<dbReference type="PANTHER" id="PTHR11932">
    <property type="entry name" value="CULLIN"/>
    <property type="match status" value="1"/>
</dbReference>
<dbReference type="Pfam" id="PF00888">
    <property type="entry name" value="Cullin"/>
    <property type="match status" value="1"/>
</dbReference>
<dbReference type="SUPFAM" id="SSF74788">
    <property type="entry name" value="Cullin repeat-like"/>
    <property type="match status" value="1"/>
</dbReference>
<organism>
    <name type="scientific">Arabidopsis thaliana</name>
    <name type="common">Mouse-ear cress</name>
    <dbReference type="NCBI Taxonomy" id="3702"/>
    <lineage>
        <taxon>Eukaryota</taxon>
        <taxon>Viridiplantae</taxon>
        <taxon>Streptophyta</taxon>
        <taxon>Embryophyta</taxon>
        <taxon>Tracheophyta</taxon>
        <taxon>Spermatophyta</taxon>
        <taxon>Magnoliopsida</taxon>
        <taxon>eudicotyledons</taxon>
        <taxon>Gunneridae</taxon>
        <taxon>Pentapetalae</taxon>
        <taxon>rosids</taxon>
        <taxon>malvids</taxon>
        <taxon>Brassicales</taxon>
        <taxon>Brassicaceae</taxon>
        <taxon>Camelineae</taxon>
        <taxon>Arabidopsis</taxon>
    </lineage>
</organism>
<accession>Q9SZ75</accession>
<comment type="interaction">
    <interactant intactId="EBI-25519661">
        <id>Q9SZ75</id>
    </interactant>
    <interactant intactId="EBI-541366">
        <id>Q39234</id>
        <label>TGA3</label>
    </interactant>
    <organismsDiffer>false</organismsDiffer>
    <experiments>3</experiments>
</comment>
<comment type="interaction">
    <interactant intactId="EBI-25519661">
        <id>Q9SZ75</id>
    </interactant>
    <interactant intactId="EBI-4426557">
        <id>Q84MB2</id>
        <label>TIFY8</label>
    </interactant>
    <organismsDiffer>false</organismsDiffer>
    <experiments>3</experiments>
</comment>
<comment type="similarity">
    <text evidence="2">Belongs to the cullin family.</text>
</comment>
<feature type="chain" id="PRO_0000396856" description="Cullin-like protein 5">
    <location>
        <begin position="1"/>
        <end position="434"/>
    </location>
</feature>
<feature type="region of interest" description="Disordered" evidence="1">
    <location>
        <begin position="1"/>
        <end position="34"/>
    </location>
</feature>